<keyword id="KW-0175">Coiled coil</keyword>
<keyword id="KW-0963">Cytoplasm</keyword>
<keyword id="KW-0507">mRNA processing</keyword>
<keyword id="KW-0508">mRNA splicing</keyword>
<keyword id="KW-0539">Nucleus</keyword>
<keyword id="KW-1185">Reference proteome</keyword>
<keyword id="KW-0747">Spliceosome</keyword>
<reference key="1">
    <citation type="journal article" date="2004" name="Nature">
        <title>Genome evolution in yeasts.</title>
        <authorList>
            <person name="Dujon B."/>
            <person name="Sherman D."/>
            <person name="Fischer G."/>
            <person name="Durrens P."/>
            <person name="Casaregola S."/>
            <person name="Lafontaine I."/>
            <person name="de Montigny J."/>
            <person name="Marck C."/>
            <person name="Neuveglise C."/>
            <person name="Talla E."/>
            <person name="Goffard N."/>
            <person name="Frangeul L."/>
            <person name="Aigle M."/>
            <person name="Anthouard V."/>
            <person name="Babour A."/>
            <person name="Barbe V."/>
            <person name="Barnay S."/>
            <person name="Blanchin S."/>
            <person name="Beckerich J.-M."/>
            <person name="Beyne E."/>
            <person name="Bleykasten C."/>
            <person name="Boisrame A."/>
            <person name="Boyer J."/>
            <person name="Cattolico L."/>
            <person name="Confanioleri F."/>
            <person name="de Daruvar A."/>
            <person name="Despons L."/>
            <person name="Fabre E."/>
            <person name="Fairhead C."/>
            <person name="Ferry-Dumazet H."/>
            <person name="Groppi A."/>
            <person name="Hantraye F."/>
            <person name="Hennequin C."/>
            <person name="Jauniaux N."/>
            <person name="Joyet P."/>
            <person name="Kachouri R."/>
            <person name="Kerrest A."/>
            <person name="Koszul R."/>
            <person name="Lemaire M."/>
            <person name="Lesur I."/>
            <person name="Ma L."/>
            <person name="Muller H."/>
            <person name="Nicaud J.-M."/>
            <person name="Nikolski M."/>
            <person name="Oztas S."/>
            <person name="Ozier-Kalogeropoulos O."/>
            <person name="Pellenz S."/>
            <person name="Potier S."/>
            <person name="Richard G.-F."/>
            <person name="Straub M.-L."/>
            <person name="Suleau A."/>
            <person name="Swennen D."/>
            <person name="Tekaia F."/>
            <person name="Wesolowski-Louvel M."/>
            <person name="Westhof E."/>
            <person name="Wirth B."/>
            <person name="Zeniou-Meyer M."/>
            <person name="Zivanovic Y."/>
            <person name="Bolotin-Fukuhara M."/>
            <person name="Thierry A."/>
            <person name="Bouchier C."/>
            <person name="Caudron B."/>
            <person name="Scarpelli C."/>
            <person name="Gaillardin C."/>
            <person name="Weissenbach J."/>
            <person name="Wincker P."/>
            <person name="Souciet J.-L."/>
        </authorList>
    </citation>
    <scope>NUCLEOTIDE SEQUENCE [LARGE SCALE GENOMIC DNA]</scope>
    <source>
        <strain>CLIB 122 / E 150</strain>
    </source>
</reference>
<name>CWC21_YARLI</name>
<dbReference type="EMBL" id="CR382132">
    <property type="protein sequence ID" value="CAG78594.1"/>
    <property type="molecule type" value="Genomic_DNA"/>
</dbReference>
<dbReference type="RefSeq" id="XP_505783.1">
    <property type="nucleotide sequence ID" value="XM_505783.1"/>
</dbReference>
<dbReference type="SMR" id="Q6C0M9"/>
<dbReference type="STRING" id="284591.Q6C0M9"/>
<dbReference type="EnsemblFungi" id="CAG78594">
    <property type="protein sequence ID" value="CAG78594"/>
    <property type="gene ID" value="YALI0_F23309g"/>
</dbReference>
<dbReference type="KEGG" id="yli:2908777"/>
<dbReference type="VEuPathDB" id="FungiDB:YALI0_F23309g"/>
<dbReference type="HOGENOM" id="CLU_980723_0_0_1"/>
<dbReference type="InParanoid" id="Q6C0M9"/>
<dbReference type="OMA" id="GRSHYDG"/>
<dbReference type="OrthoDB" id="125264at4891"/>
<dbReference type="Proteomes" id="UP000001300">
    <property type="component" value="Chromosome F"/>
</dbReference>
<dbReference type="GO" id="GO:0005737">
    <property type="term" value="C:cytoplasm"/>
    <property type="evidence" value="ECO:0007669"/>
    <property type="project" value="UniProtKB-SubCell"/>
</dbReference>
<dbReference type="GO" id="GO:0005634">
    <property type="term" value="C:nucleus"/>
    <property type="evidence" value="ECO:0000318"/>
    <property type="project" value="GO_Central"/>
</dbReference>
<dbReference type="GO" id="GO:0005681">
    <property type="term" value="C:spliceosomal complex"/>
    <property type="evidence" value="ECO:0007669"/>
    <property type="project" value="UniProtKB-KW"/>
</dbReference>
<dbReference type="GO" id="GO:0006397">
    <property type="term" value="P:mRNA processing"/>
    <property type="evidence" value="ECO:0007669"/>
    <property type="project" value="UniProtKB-KW"/>
</dbReference>
<dbReference type="GO" id="GO:0008380">
    <property type="term" value="P:RNA splicing"/>
    <property type="evidence" value="ECO:0007669"/>
    <property type="project" value="UniProtKB-KW"/>
</dbReference>
<dbReference type="CDD" id="cd21372">
    <property type="entry name" value="cwf21_CWC21-like"/>
    <property type="match status" value="1"/>
</dbReference>
<dbReference type="Gene3D" id="6.10.140.420">
    <property type="match status" value="1"/>
</dbReference>
<dbReference type="InterPro" id="IPR051372">
    <property type="entry name" value="CWC21"/>
</dbReference>
<dbReference type="InterPro" id="IPR013170">
    <property type="entry name" value="mRNA_splic_Cwf21_dom"/>
</dbReference>
<dbReference type="PANTHER" id="PTHR36562">
    <property type="entry name" value="SERINE/ARGININE REPETITIVE MATRIX 2"/>
    <property type="match status" value="1"/>
</dbReference>
<dbReference type="PANTHER" id="PTHR36562:SF5">
    <property type="entry name" value="SERINE_ARGININE REPETITIVE MATRIX 2"/>
    <property type="match status" value="1"/>
</dbReference>
<dbReference type="Pfam" id="PF08312">
    <property type="entry name" value="cwf21"/>
    <property type="match status" value="1"/>
</dbReference>
<dbReference type="SMART" id="SM01115">
    <property type="entry name" value="cwf21"/>
    <property type="match status" value="1"/>
</dbReference>
<sequence>MSYNGIGLSTPRGSATSGHIQTNISNRAFQSTNHRGEFAHHEMTDEQDKRLNKKLDRDYAADRQADVELLEHERKRKVEVACMELQDKLEEEGQKGEEEIEEEVNTLRRQLTLKMARELDVRTTIVSADREALRKNYHKAAVIKQQEMDRMRDAFDTTKNLDDRGRDRPRNRQRQNREKSPVRDTRRSRSARERSPSRRGRRPRRYSVTEDVRTSEVISERQGSGSPCRRADSRSRSRSPERGSRRKSYRERSRSRSRERSERRGRRDSVREREQDRSRSPLPY</sequence>
<comment type="function">
    <text evidence="1">Involved in pre-mRNA splicing. May function at or prior to the first catalytic step of splicing at the catalytic center of the spliceosome. May do so by stabilizing the catalytic center or the position of the RNA substrate (By similarity).</text>
</comment>
<comment type="subunit">
    <text evidence="1">Associates with the NTC complex (or PRP19-associated complex). The NTC complex associates with the spliceosome after the release of the U1 and U4 snRNAs and forms the CWC spliceosome subcomplex reminiscent of a late-stage spliceosome.</text>
</comment>
<comment type="subcellular location">
    <subcellularLocation>
        <location evidence="1">Cytoplasm</location>
    </subcellularLocation>
    <subcellularLocation>
        <location evidence="1">Nucleus</location>
    </subcellularLocation>
</comment>
<comment type="similarity">
    <text evidence="4">Belongs to the CWC21 family.</text>
</comment>
<evidence type="ECO:0000250" key="1"/>
<evidence type="ECO:0000255" key="2"/>
<evidence type="ECO:0000256" key="3">
    <source>
        <dbReference type="SAM" id="MobiDB-lite"/>
    </source>
</evidence>
<evidence type="ECO:0000305" key="4"/>
<proteinExistence type="inferred from homology"/>
<organism>
    <name type="scientific">Yarrowia lipolytica (strain CLIB 122 / E 150)</name>
    <name type="common">Yeast</name>
    <name type="synonym">Candida lipolytica</name>
    <dbReference type="NCBI Taxonomy" id="284591"/>
    <lineage>
        <taxon>Eukaryota</taxon>
        <taxon>Fungi</taxon>
        <taxon>Dikarya</taxon>
        <taxon>Ascomycota</taxon>
        <taxon>Saccharomycotina</taxon>
        <taxon>Dipodascomycetes</taxon>
        <taxon>Dipodascales</taxon>
        <taxon>Dipodascales incertae sedis</taxon>
        <taxon>Yarrowia</taxon>
    </lineage>
</organism>
<protein>
    <recommendedName>
        <fullName>Pre-mRNA-splicing factor CWC21</fullName>
    </recommendedName>
</protein>
<gene>
    <name type="primary">CWC21</name>
    <name type="ordered locus">YALI0F23309g</name>
</gene>
<feature type="chain" id="PRO_0000123504" description="Pre-mRNA-splicing factor CWC21">
    <location>
        <begin position="1"/>
        <end position="284"/>
    </location>
</feature>
<feature type="domain" description="CWF21" evidence="2">
    <location>
        <begin position="70"/>
        <end position="114"/>
    </location>
</feature>
<feature type="region of interest" description="Disordered" evidence="3">
    <location>
        <begin position="148"/>
        <end position="284"/>
    </location>
</feature>
<feature type="coiled-coil region" evidence="2">
    <location>
        <begin position="71"/>
        <end position="118"/>
    </location>
</feature>
<feature type="compositionally biased region" description="Basic and acidic residues" evidence="3">
    <location>
        <begin position="148"/>
        <end position="196"/>
    </location>
</feature>
<feature type="compositionally biased region" description="Basic and acidic residues" evidence="3">
    <location>
        <begin position="229"/>
        <end position="243"/>
    </location>
</feature>
<feature type="compositionally biased region" description="Basic and acidic residues" evidence="3">
    <location>
        <begin position="250"/>
        <end position="284"/>
    </location>
</feature>
<accession>Q6C0M9</accession>